<keyword id="KW-1185">Reference proteome</keyword>
<keyword id="KW-0749">Sporulation</keyword>
<name>SSPI_SHOC1</name>
<proteinExistence type="inferred from homology"/>
<comment type="subcellular location">
    <subcellularLocation>
        <location evidence="1">Spore core</location>
    </subcellularLocation>
</comment>
<comment type="induction">
    <text evidence="1">Expressed only in the forespore compartment of sporulating cells.</text>
</comment>
<comment type="similarity">
    <text evidence="1">Belongs to the SspI family.</text>
</comment>
<dbReference type="EMBL" id="AP006627">
    <property type="protein sequence ID" value="BAD65217.1"/>
    <property type="molecule type" value="Genomic_DNA"/>
</dbReference>
<dbReference type="RefSeq" id="WP_011247525.1">
    <property type="nucleotide sequence ID" value="NC_006582.1"/>
</dbReference>
<dbReference type="SMR" id="Q5WEJ3"/>
<dbReference type="STRING" id="66692.ABC2682"/>
<dbReference type="GeneID" id="86926924"/>
<dbReference type="KEGG" id="bcl:ABC2682"/>
<dbReference type="eggNOG" id="ENOG5032YQ7">
    <property type="taxonomic scope" value="Bacteria"/>
</dbReference>
<dbReference type="HOGENOM" id="CLU_188877_0_0_9"/>
<dbReference type="OrthoDB" id="2453696at2"/>
<dbReference type="Proteomes" id="UP000001168">
    <property type="component" value="Chromosome"/>
</dbReference>
<dbReference type="GO" id="GO:0030436">
    <property type="term" value="P:asexual sporulation"/>
    <property type="evidence" value="ECO:0007669"/>
    <property type="project" value="UniProtKB-UniRule"/>
</dbReference>
<dbReference type="GO" id="GO:0030435">
    <property type="term" value="P:sporulation resulting in formation of a cellular spore"/>
    <property type="evidence" value="ECO:0007669"/>
    <property type="project" value="UniProtKB-KW"/>
</dbReference>
<dbReference type="HAMAP" id="MF_00669">
    <property type="entry name" value="SspI"/>
    <property type="match status" value="1"/>
</dbReference>
<dbReference type="InterPro" id="IPR017525">
    <property type="entry name" value="SspI"/>
</dbReference>
<dbReference type="NCBIfam" id="TIGR03092">
    <property type="entry name" value="SASP_sspI"/>
    <property type="match status" value="1"/>
</dbReference>
<dbReference type="Pfam" id="PF14098">
    <property type="entry name" value="SSPI"/>
    <property type="match status" value="1"/>
</dbReference>
<reference key="1">
    <citation type="submission" date="2003-10" db="EMBL/GenBank/DDBJ databases">
        <title>The complete genome sequence of the alkaliphilic Bacillus clausii KSM-K16.</title>
        <authorList>
            <person name="Takaki Y."/>
            <person name="Kageyama Y."/>
            <person name="Shimamura S."/>
            <person name="Suzuki H."/>
            <person name="Nishi S."/>
            <person name="Hatada Y."/>
            <person name="Kawai S."/>
            <person name="Ito S."/>
            <person name="Horikoshi K."/>
        </authorList>
    </citation>
    <scope>NUCLEOTIDE SEQUENCE [LARGE SCALE GENOMIC DNA]</scope>
    <source>
        <strain>KSM-K16</strain>
    </source>
</reference>
<gene>
    <name evidence="1" type="primary">sspI</name>
    <name type="ordered locus">ABC2682</name>
</gene>
<evidence type="ECO:0000255" key="1">
    <source>
        <dbReference type="HAMAP-Rule" id="MF_00669"/>
    </source>
</evidence>
<feature type="chain" id="PRO_0000218334" description="Small, acid-soluble spore protein I">
    <location>
        <begin position="1"/>
        <end position="69"/>
    </location>
</feature>
<organism>
    <name type="scientific">Shouchella clausii (strain KSM-K16)</name>
    <name type="common">Alkalihalobacillus clausii</name>
    <dbReference type="NCBI Taxonomy" id="66692"/>
    <lineage>
        <taxon>Bacteria</taxon>
        <taxon>Bacillati</taxon>
        <taxon>Bacillota</taxon>
        <taxon>Bacilli</taxon>
        <taxon>Bacillales</taxon>
        <taxon>Bacillaceae</taxon>
        <taxon>Shouchella</taxon>
    </lineage>
</organism>
<sequence length="69" mass="7662">MSFNLRNAIMANIQGSSQQEVEATIVDAMESGEEKMLPGLGVLFEVYWKHADESQKDELCAEISKGLNE</sequence>
<protein>
    <recommendedName>
        <fullName evidence="1">Small, acid-soluble spore protein I</fullName>
        <shortName evidence="1">SASP I</shortName>
    </recommendedName>
</protein>
<accession>Q5WEJ3</accession>